<accession>Q28DI5</accession>
<comment type="function">
    <text evidence="3">Probable acetyltransferase.</text>
</comment>
<comment type="subcellular location">
    <subcellularLocation>
        <location evidence="3">Membrane</location>
        <topology evidence="3">Multi-pass membrane protein</topology>
    </subcellularLocation>
</comment>
<comment type="similarity">
    <text evidence="3">Belongs to the camello family.</text>
</comment>
<name>NAT14_XENTR</name>
<reference key="1">
    <citation type="submission" date="2006-10" db="EMBL/GenBank/DDBJ databases">
        <authorList>
            <consortium name="Sanger Xenopus tropicalis EST/cDNA project"/>
        </authorList>
    </citation>
    <scope>NUCLEOTIDE SEQUENCE [LARGE SCALE MRNA]</scope>
    <source>
        <tissue>Egg</tissue>
    </source>
</reference>
<keyword id="KW-0012">Acyltransferase</keyword>
<keyword id="KW-0472">Membrane</keyword>
<keyword id="KW-1185">Reference proteome</keyword>
<keyword id="KW-0808">Transferase</keyword>
<keyword id="KW-0812">Transmembrane</keyword>
<keyword id="KW-1133">Transmembrane helix</keyword>
<evidence type="ECO:0000255" key="1"/>
<evidence type="ECO:0000255" key="2">
    <source>
        <dbReference type="PROSITE-ProRule" id="PRU00532"/>
    </source>
</evidence>
<evidence type="ECO:0000305" key="3"/>
<proteinExistence type="evidence at transcript level"/>
<dbReference type="EC" id="2.3.1.-" evidence="3"/>
<dbReference type="EMBL" id="CR855496">
    <property type="protein sequence ID" value="CAJ81357.1"/>
    <property type="molecule type" value="mRNA"/>
</dbReference>
<dbReference type="RefSeq" id="NP_001039065.1">
    <property type="nucleotide sequence ID" value="NM_001045600.1"/>
</dbReference>
<dbReference type="RefSeq" id="XP_012822146.1">
    <property type="nucleotide sequence ID" value="XM_012966692.3"/>
</dbReference>
<dbReference type="RefSeq" id="XP_012822147.1">
    <property type="nucleotide sequence ID" value="XM_012966693.3"/>
</dbReference>
<dbReference type="RefSeq" id="XP_012822148.1">
    <property type="nucleotide sequence ID" value="XM_012966694.3"/>
</dbReference>
<dbReference type="RefSeq" id="XP_012822149.1">
    <property type="nucleotide sequence ID" value="XM_012966695.3"/>
</dbReference>
<dbReference type="RefSeq" id="XP_012822150.1">
    <property type="nucleotide sequence ID" value="XM_012966696.3"/>
</dbReference>
<dbReference type="RefSeq" id="XP_017950908.1">
    <property type="nucleotide sequence ID" value="XM_018095419.2"/>
</dbReference>
<dbReference type="FunCoup" id="Q28DI5">
    <property type="interactions" value="1279"/>
</dbReference>
<dbReference type="STRING" id="8364.ENSXETP00000012980"/>
<dbReference type="PaxDb" id="8364-ENSXETP00000058245"/>
<dbReference type="GeneID" id="733854"/>
<dbReference type="KEGG" id="xtr:733854"/>
<dbReference type="AGR" id="Xenbase:XB-GENE-1017192"/>
<dbReference type="CTD" id="57106"/>
<dbReference type="Xenbase" id="XB-GENE-1017192">
    <property type="gene designation" value="nat14"/>
</dbReference>
<dbReference type="eggNOG" id="ENOG502RYNT">
    <property type="taxonomic scope" value="Eukaryota"/>
</dbReference>
<dbReference type="InParanoid" id="Q28DI5"/>
<dbReference type="OMA" id="PWVAVWG"/>
<dbReference type="OrthoDB" id="41532at2759"/>
<dbReference type="Proteomes" id="UP000008143">
    <property type="component" value="Chromosome 7"/>
</dbReference>
<dbReference type="Bgee" id="ENSXETG00000035711">
    <property type="expression patterns" value="Expressed in egg cell and 11 other cell types or tissues"/>
</dbReference>
<dbReference type="GO" id="GO:0016020">
    <property type="term" value="C:membrane"/>
    <property type="evidence" value="ECO:0007669"/>
    <property type="project" value="UniProtKB-SubCell"/>
</dbReference>
<dbReference type="GO" id="GO:0008080">
    <property type="term" value="F:N-acetyltransferase activity"/>
    <property type="evidence" value="ECO:0007669"/>
    <property type="project" value="InterPro"/>
</dbReference>
<dbReference type="CDD" id="cd04301">
    <property type="entry name" value="NAT_SF"/>
    <property type="match status" value="1"/>
</dbReference>
<dbReference type="Gene3D" id="3.40.630.30">
    <property type="match status" value="1"/>
</dbReference>
<dbReference type="InterPro" id="IPR016181">
    <property type="entry name" value="Acyl_CoA_acyltransferase"/>
</dbReference>
<dbReference type="InterPro" id="IPR000182">
    <property type="entry name" value="GNAT_dom"/>
</dbReference>
<dbReference type="InterPro" id="IPR050769">
    <property type="entry name" value="NAT_camello-type"/>
</dbReference>
<dbReference type="PANTHER" id="PTHR13947">
    <property type="entry name" value="GNAT FAMILY N-ACETYLTRANSFERASE"/>
    <property type="match status" value="1"/>
</dbReference>
<dbReference type="PANTHER" id="PTHR13947:SF51">
    <property type="entry name" value="N-ACETYLTRANSFERASE 14-RELATED"/>
    <property type="match status" value="1"/>
</dbReference>
<dbReference type="Pfam" id="PF00583">
    <property type="entry name" value="Acetyltransf_1"/>
    <property type="match status" value="1"/>
</dbReference>
<dbReference type="SUPFAM" id="SSF55729">
    <property type="entry name" value="Acyl-CoA N-acyltransferases (Nat)"/>
    <property type="match status" value="1"/>
</dbReference>
<dbReference type="PROSITE" id="PS51186">
    <property type="entry name" value="GNAT"/>
    <property type="match status" value="1"/>
</dbReference>
<feature type="chain" id="PRO_0000307790" description="Probable N-acetyltransferase 14">
    <location>
        <begin position="1"/>
        <end position="206"/>
    </location>
</feature>
<feature type="transmembrane region" description="Helical" evidence="1">
    <location>
        <begin position="37"/>
        <end position="57"/>
    </location>
</feature>
<feature type="transmembrane region" description="Helical" evidence="1">
    <location>
        <begin position="60"/>
        <end position="80"/>
    </location>
</feature>
<feature type="domain" description="N-acetyltransferase" evidence="2">
    <location>
        <begin position="9"/>
        <end position="206"/>
    </location>
</feature>
<protein>
    <recommendedName>
        <fullName>Probable N-acetyltransferase 14</fullName>
        <ecNumber evidence="3">2.3.1.-</ecNumber>
    </recommendedName>
</protein>
<sequence length="206" mass="23672">MPFIDENQLSVREMREEEAPVVLEMLKDGFKDTENRLILYILTRPMTLLLMAVASSGLRFILNSFSVALVIPVLLTIVGLKLLLWRSPDLKQIYSYYSIGQRKIWVAVYDQDDICGCVALEPTQDHQTVELKRMSVSRWYRRSGVGTHLLKFFEDHAKKKGFRGIVLYTSVVAKAAIGLFKNCGYKVTGGWNWLGYTIVQEFRKDI</sequence>
<gene>
    <name type="primary">nat14</name>
    <name type="ORF">TEgg081i20.1</name>
</gene>
<organism>
    <name type="scientific">Xenopus tropicalis</name>
    <name type="common">Western clawed frog</name>
    <name type="synonym">Silurana tropicalis</name>
    <dbReference type="NCBI Taxonomy" id="8364"/>
    <lineage>
        <taxon>Eukaryota</taxon>
        <taxon>Metazoa</taxon>
        <taxon>Chordata</taxon>
        <taxon>Craniata</taxon>
        <taxon>Vertebrata</taxon>
        <taxon>Euteleostomi</taxon>
        <taxon>Amphibia</taxon>
        <taxon>Batrachia</taxon>
        <taxon>Anura</taxon>
        <taxon>Pipoidea</taxon>
        <taxon>Pipidae</taxon>
        <taxon>Xenopodinae</taxon>
        <taxon>Xenopus</taxon>
        <taxon>Silurana</taxon>
    </lineage>
</organism>